<accession>P0DI60</accession>
<name>CASP1_HELAN</name>
<feature type="chain" id="PRO_0000417767" description="Casparian strip membrane protein 1">
    <location>
        <begin position="1"/>
        <end position="212"/>
    </location>
</feature>
<feature type="topological domain" description="Cytoplasmic" evidence="2">
    <location>
        <begin position="1"/>
        <end position="49"/>
    </location>
</feature>
<feature type="transmembrane region" description="Helical" evidence="2">
    <location>
        <begin position="50"/>
        <end position="70"/>
    </location>
</feature>
<feature type="topological domain" description="Extracellular" evidence="2">
    <location>
        <begin position="71"/>
        <end position="100"/>
    </location>
</feature>
<feature type="transmembrane region" description="Helical" evidence="2">
    <location>
        <begin position="101"/>
        <end position="121"/>
    </location>
</feature>
<feature type="topological domain" description="Cytoplasmic" evidence="2">
    <location>
        <begin position="122"/>
        <end position="133"/>
    </location>
</feature>
<feature type="transmembrane region" description="Helical" evidence="2">
    <location>
        <begin position="134"/>
        <end position="154"/>
    </location>
</feature>
<feature type="topological domain" description="Extracellular" evidence="2">
    <location>
        <begin position="155"/>
        <end position="186"/>
    </location>
</feature>
<feature type="transmembrane region" description="Helical" evidence="2">
    <location>
        <begin position="187"/>
        <end position="207"/>
    </location>
</feature>
<feature type="topological domain" description="Cytoplasmic" evidence="2">
    <location>
        <begin position="208"/>
        <end position="212"/>
    </location>
</feature>
<feature type="region of interest" description="Disordered" evidence="3">
    <location>
        <begin position="1"/>
        <end position="28"/>
    </location>
</feature>
<feature type="compositionally biased region" description="Low complexity" evidence="3">
    <location>
        <begin position="16"/>
        <end position="28"/>
    </location>
</feature>
<sequence length="212" mass="22371">MDSSNSTKETGDIPIPVTSSKSSKAAPPPVVAAKAKSTTKQPLVSGWKRGLGIIDFILRICAIAAALAAATAMGTTSQQLPFFTQFFQFKADYNDLPAFTFFVIANAMAGAYLVLSLPFSILCIVRPHILGARLMLLVFDTVAVPLVTAAASAAASIVYLAHNGNSDANWVAICRQFNDFCQRVSGAVVASFITALLFVVLVAVSAVALRQK</sequence>
<proteinExistence type="evidence at transcript level"/>
<dbReference type="EMBL" id="DY919660">
    <property type="status" value="NOT_ANNOTATED_CDS"/>
    <property type="molecule type" value="mRNA"/>
</dbReference>
<dbReference type="GO" id="GO:0005886">
    <property type="term" value="C:plasma membrane"/>
    <property type="evidence" value="ECO:0007669"/>
    <property type="project" value="UniProtKB-SubCell"/>
</dbReference>
<dbReference type="GO" id="GO:0071555">
    <property type="term" value="P:cell wall organization"/>
    <property type="evidence" value="ECO:0007669"/>
    <property type="project" value="UniProtKB-KW"/>
</dbReference>
<dbReference type="InterPro" id="IPR006459">
    <property type="entry name" value="CASP/CASPL"/>
</dbReference>
<dbReference type="InterPro" id="IPR006702">
    <property type="entry name" value="CASP_dom"/>
</dbReference>
<dbReference type="InterPro" id="IPR044173">
    <property type="entry name" value="CASPL"/>
</dbReference>
<dbReference type="NCBIfam" id="TIGR01569">
    <property type="entry name" value="A_tha_TIGR01569"/>
    <property type="match status" value="1"/>
</dbReference>
<dbReference type="PANTHER" id="PTHR36488:SF11">
    <property type="entry name" value="CASP-LIKE PROTEIN"/>
    <property type="match status" value="1"/>
</dbReference>
<dbReference type="PANTHER" id="PTHR36488">
    <property type="entry name" value="CASP-LIKE PROTEIN 1U1"/>
    <property type="match status" value="1"/>
</dbReference>
<dbReference type="Pfam" id="PF04535">
    <property type="entry name" value="CASP_dom"/>
    <property type="match status" value="1"/>
</dbReference>
<comment type="function">
    <text evidence="1">Regulates membrane-cell wall junctions and localized cell wall deposition. Required for establishment of the Casparian strip membrane domain (CSD) and the subsequent formation of Casparian strips, a cell wall modification of the root endodermis that determines an apoplastic barrier between the intraorganismal apoplasm and the extraorganismal apoplasm and prevents lateral diffusion (By similarity).</text>
</comment>
<comment type="subunit">
    <text evidence="1">Homodimer and heterodimers.</text>
</comment>
<comment type="subcellular location">
    <subcellularLocation>
        <location evidence="1">Cell membrane</location>
        <topology evidence="1">Multi-pass membrane protein</topology>
    </subcellularLocation>
    <text evidence="1">Very restricted localization following a belt shape within the plasma membrane which coincides with the position of the Casparian strip membrane domain in the root endodermis.</text>
</comment>
<comment type="similarity">
    <text evidence="4">Belongs to the Casparian strip membrane proteins (CASP) family.</text>
</comment>
<organism>
    <name type="scientific">Helianthus annuus</name>
    <name type="common">Common sunflower</name>
    <dbReference type="NCBI Taxonomy" id="4232"/>
    <lineage>
        <taxon>Eukaryota</taxon>
        <taxon>Viridiplantae</taxon>
        <taxon>Streptophyta</taxon>
        <taxon>Embryophyta</taxon>
        <taxon>Tracheophyta</taxon>
        <taxon>Spermatophyta</taxon>
        <taxon>Magnoliopsida</taxon>
        <taxon>eudicotyledons</taxon>
        <taxon>Gunneridae</taxon>
        <taxon>Pentapetalae</taxon>
        <taxon>asterids</taxon>
        <taxon>campanulids</taxon>
        <taxon>Asterales</taxon>
        <taxon>Asteraceae</taxon>
        <taxon>Asteroideae</taxon>
        <taxon>Heliantheae alliance</taxon>
        <taxon>Heliantheae</taxon>
        <taxon>Helianthus</taxon>
    </lineage>
</organism>
<reference key="1">
    <citation type="submission" date="2009-05" db="EMBL/GenBank/DDBJ databases">
        <title>Sunflower (Helianthus annuus) ESTs (set 2) from the compositae genome project http://compgenomics.ucdavis.edu/.</title>
        <authorList>
            <person name="Michelmore R.W."/>
            <person name="Knapp S."/>
            <person name="Rieseberg L."/>
            <person name="Bradford K."/>
            <person name="Kesseli R."/>
            <person name="Boore J."/>
            <person name="Kozik A."/>
            <person name="Matvienko M."/>
            <person name="Lavelle D."/>
            <person name="Lai Z."/>
        </authorList>
    </citation>
    <scope>NUCLEOTIDE SEQUENCE [LARGE SCALE MRNA]</scope>
</reference>
<reference key="2">
    <citation type="journal article" date="2014" name="Plant Physiol.">
        <title>Functional and evolutionary analysis of the CASPARIAN STRIP MEMBRANE DOMAIN PROTEIN family.</title>
        <authorList>
            <person name="Roppolo D."/>
            <person name="Boeckmann B."/>
            <person name="Pfister A."/>
            <person name="Boutet E."/>
            <person name="Rubio M.C."/>
            <person name="Denervaud-Tendon V."/>
            <person name="Vermeer J.E."/>
            <person name="Gheyselinck J."/>
            <person name="Xenarios I."/>
            <person name="Geldner N."/>
        </authorList>
    </citation>
    <scope>GENE FAMILY</scope>
    <scope>NOMENCLATURE</scope>
</reference>
<keyword id="KW-1003">Cell membrane</keyword>
<keyword id="KW-0961">Cell wall biogenesis/degradation</keyword>
<keyword id="KW-0472">Membrane</keyword>
<keyword id="KW-0812">Transmembrane</keyword>
<keyword id="KW-1133">Transmembrane helix</keyword>
<evidence type="ECO:0000250" key="1"/>
<evidence type="ECO:0000255" key="2"/>
<evidence type="ECO:0000256" key="3">
    <source>
        <dbReference type="SAM" id="MobiDB-lite"/>
    </source>
</evidence>
<evidence type="ECO:0000305" key="4"/>
<protein>
    <recommendedName>
        <fullName>Casparian strip membrane protein 1</fullName>
        <shortName>HaCASP1</shortName>
    </recommendedName>
</protein>